<reference key="1">
    <citation type="journal article" date="1998" name="Science">
        <title>Genome sequence of the nematode C. elegans: a platform for investigating biology.</title>
        <authorList>
            <consortium name="The C. elegans sequencing consortium"/>
        </authorList>
    </citation>
    <scope>NUCLEOTIDE SEQUENCE [LARGE SCALE GENOMIC DNA]</scope>
    <scope>ALTERNATIVE SPLICING</scope>
    <source>
        <strain>Bristol N2</strain>
    </source>
</reference>
<reference key="2">
    <citation type="journal article" date="2004" name="Dev. Cell">
        <title>Centriole assembly requires both centriolar and pericentriolar material proteins.</title>
        <authorList>
            <person name="Dammermann A."/>
            <person name="Mueller-Reichert T."/>
            <person name="Pelletier L."/>
            <person name="Habermann B."/>
            <person name="Desai A."/>
            <person name="Oegema K."/>
        </authorList>
    </citation>
    <scope>FUNCTION</scope>
    <scope>SUBCELLULAR LOCATION</scope>
    <scope>DEVELOPMENTAL STAGE</scope>
</reference>
<reference key="3">
    <citation type="journal article" date="2005" name="Nat. Cell Biol.">
        <title>SAS-6 defines a protein family required for centrosome duplication in C. elegans and in human cells.</title>
        <authorList>
            <person name="Leidel S."/>
            <person name="Delattre M."/>
            <person name="Cerutti L."/>
            <person name="Baumer K."/>
            <person name="Goenczy P."/>
        </authorList>
    </citation>
    <scope>FUNCTION</scope>
    <scope>SUBCELLULAR LOCATION</scope>
    <scope>DOMAIN</scope>
    <scope>DEVELOPMENTAL STAGE</scope>
    <scope>INTERACTION WITH SAS-5</scope>
</reference>
<reference key="4">
    <citation type="journal article" date="2008" name="Dev. Cell">
        <title>The conserved protein SZY-20 opposes the Plk4-related kinase ZYG-1 to limit centrosome size.</title>
        <authorList>
            <person name="Song M.H."/>
            <person name="Aravind L."/>
            <person name="Mueller-Reichert T."/>
            <person name="O'Connell K.F."/>
        </authorList>
    </citation>
    <scope>FUNCTION</scope>
    <scope>DISRUPTION PHENOTYPE</scope>
</reference>
<reference key="5">
    <citation type="journal article" date="2011" name="Cell">
        <title>Structural basis of the 9-fold symmetry of centrioles.</title>
        <authorList>
            <person name="Kitagawa D."/>
            <person name="Vakonakis I."/>
            <person name="Olieric N."/>
            <person name="Hilbert M."/>
            <person name="Keller D."/>
            <person name="Olieric V."/>
            <person name="Bortfeld M."/>
            <person name="Erat M.C."/>
            <person name="Fluckiger I."/>
            <person name="Gonczy P."/>
            <person name="Steinmetz M.O."/>
        </authorList>
    </citation>
    <scope>X-RAY CRYSTALLOGRAPHY (2.1 ANGSTROMS) OF 1-168</scope>
    <scope>MUTAGENESIS OF ILE-154</scope>
</reference>
<keyword id="KW-0002">3D-structure</keyword>
<keyword id="KW-0131">Cell cycle</keyword>
<keyword id="KW-0175">Coiled coil</keyword>
<keyword id="KW-0963">Cytoplasm</keyword>
<keyword id="KW-0206">Cytoskeleton</keyword>
<keyword id="KW-0217">Developmental protein</keyword>
<keyword id="KW-1185">Reference proteome</keyword>
<protein>
    <recommendedName>
        <fullName>Spindle assembly abnormal protein 6</fullName>
    </recommendedName>
</protein>
<name>SAS6_CAEEL</name>
<accession>O62479</accession>
<dbReference type="EMBL" id="AL021492">
    <property type="protein sequence ID" value="CAA16384.1"/>
    <property type="molecule type" value="Genomic_DNA"/>
</dbReference>
<dbReference type="PIR" id="T26936">
    <property type="entry name" value="T26936"/>
</dbReference>
<dbReference type="RefSeq" id="NP_502660.1">
    <property type="nucleotide sequence ID" value="NM_070259.6"/>
</dbReference>
<dbReference type="PDB" id="3PYI">
    <property type="method" value="X-ray"/>
    <property type="resolution" value="2.10 A"/>
    <property type="chains" value="A/B=1-168"/>
</dbReference>
<dbReference type="PDB" id="4G79">
    <property type="method" value="X-ray"/>
    <property type="resolution" value="1.80 A"/>
    <property type="chains" value="A=1-168"/>
</dbReference>
<dbReference type="PDB" id="4GEU">
    <property type="method" value="X-ray"/>
    <property type="resolution" value="2.65 A"/>
    <property type="chains" value="A/B/C/D=1-168"/>
</dbReference>
<dbReference type="PDB" id="4GEX">
    <property type="method" value="X-ray"/>
    <property type="resolution" value="2.80 A"/>
    <property type="chains" value="A/B/C/D=1-168"/>
</dbReference>
<dbReference type="PDB" id="4GFA">
    <property type="method" value="X-ray"/>
    <property type="resolution" value="3.55 A"/>
    <property type="chains" value="A/B/C/D=1-215"/>
</dbReference>
<dbReference type="PDB" id="4GFC">
    <property type="method" value="X-ray"/>
    <property type="resolution" value="2.85 A"/>
    <property type="chains" value="A/B=1-215"/>
</dbReference>
<dbReference type="PDB" id="4GKW">
    <property type="method" value="X-ray"/>
    <property type="resolution" value="3.30 A"/>
    <property type="chains" value="A/B=248-410"/>
</dbReference>
<dbReference type="PDBsum" id="3PYI"/>
<dbReference type="PDBsum" id="4G79"/>
<dbReference type="PDBsum" id="4GEU"/>
<dbReference type="PDBsum" id="4GEX"/>
<dbReference type="PDBsum" id="4GFA"/>
<dbReference type="PDBsum" id="4GFC"/>
<dbReference type="PDBsum" id="4GKW"/>
<dbReference type="BMRB" id="O62479"/>
<dbReference type="SMR" id="O62479"/>
<dbReference type="BioGRID" id="43429">
    <property type="interactions" value="10"/>
</dbReference>
<dbReference type="ComplexPortal" id="CPX-1374">
    <property type="entry name" value="SAS-5-SAS-6 complex"/>
</dbReference>
<dbReference type="DIP" id="DIP-24495N"/>
<dbReference type="FunCoup" id="O62479">
    <property type="interactions" value="1511"/>
</dbReference>
<dbReference type="IntAct" id="O62479">
    <property type="interactions" value="5"/>
</dbReference>
<dbReference type="MINT" id="O62479"/>
<dbReference type="STRING" id="6239.Y45F10D.9.1"/>
<dbReference type="iPTMnet" id="O62479"/>
<dbReference type="PaxDb" id="6239-Y45F10D.9"/>
<dbReference type="PeptideAtlas" id="O62479"/>
<dbReference type="EnsemblMetazoa" id="Y45F10D.9.1">
    <property type="protein sequence ID" value="Y45F10D.9.1"/>
    <property type="gene ID" value="WBGene00012888"/>
</dbReference>
<dbReference type="GeneID" id="178345"/>
<dbReference type="KEGG" id="cel:CELE_Y45F10D.9"/>
<dbReference type="UCSC" id="Y45F10D.9">
    <property type="organism name" value="c. elegans"/>
</dbReference>
<dbReference type="AGR" id="WB:WBGene00012888"/>
<dbReference type="CTD" id="43555"/>
<dbReference type="WormBase" id="Y45F10D.9">
    <property type="protein sequence ID" value="CE16647"/>
    <property type="gene ID" value="WBGene00012888"/>
    <property type="gene designation" value="sas-6"/>
</dbReference>
<dbReference type="eggNOG" id="ENOG502THXX">
    <property type="taxonomic scope" value="Eukaryota"/>
</dbReference>
<dbReference type="HOGENOM" id="CLU_565286_0_0_1"/>
<dbReference type="InParanoid" id="O62479"/>
<dbReference type="OMA" id="GKMGFKW"/>
<dbReference type="OrthoDB" id="49058at2759"/>
<dbReference type="SignaLink" id="O62479"/>
<dbReference type="CD-CODE" id="1E117272">
    <property type="entry name" value="Centrosome"/>
</dbReference>
<dbReference type="EvolutionaryTrace" id="O62479"/>
<dbReference type="PRO" id="PR:O62479"/>
<dbReference type="Proteomes" id="UP000001940">
    <property type="component" value="Chromosome IV"/>
</dbReference>
<dbReference type="Bgee" id="WBGene00012888">
    <property type="expression patterns" value="Expressed in germ line (C elegans) and 4 other cell types or tissues"/>
</dbReference>
<dbReference type="GO" id="GO:0005814">
    <property type="term" value="C:centriole"/>
    <property type="evidence" value="ECO:0000314"/>
    <property type="project" value="WormBase"/>
</dbReference>
<dbReference type="GO" id="GO:0005813">
    <property type="term" value="C:centrosome"/>
    <property type="evidence" value="ECO:0000318"/>
    <property type="project" value="GO_Central"/>
</dbReference>
<dbReference type="GO" id="GO:0005737">
    <property type="term" value="C:cytoplasm"/>
    <property type="evidence" value="ECO:0000314"/>
    <property type="project" value="WormBase"/>
</dbReference>
<dbReference type="GO" id="GO:0042802">
    <property type="term" value="F:identical protein binding"/>
    <property type="evidence" value="ECO:0000353"/>
    <property type="project" value="IntAct"/>
</dbReference>
<dbReference type="GO" id="GO:0019904">
    <property type="term" value="F:protein domain specific binding"/>
    <property type="evidence" value="ECO:0000353"/>
    <property type="project" value="WormBase"/>
</dbReference>
<dbReference type="GO" id="GO:0098534">
    <property type="term" value="P:centriole assembly"/>
    <property type="evidence" value="ECO:0000303"/>
    <property type="project" value="ComplexPortal"/>
</dbReference>
<dbReference type="GO" id="GO:0007099">
    <property type="term" value="P:centriole replication"/>
    <property type="evidence" value="ECO:0000315"/>
    <property type="project" value="WormBase"/>
</dbReference>
<dbReference type="GO" id="GO:0051298">
    <property type="term" value="P:centrosome duplication"/>
    <property type="evidence" value="ECO:0000303"/>
    <property type="project" value="ComplexPortal"/>
</dbReference>
<dbReference type="GO" id="GO:0008104">
    <property type="term" value="P:protein localization"/>
    <property type="evidence" value="ECO:0000315"/>
    <property type="project" value="WormBase"/>
</dbReference>
<dbReference type="GO" id="GO:0051726">
    <property type="term" value="P:regulation of cell cycle"/>
    <property type="evidence" value="ECO:0000315"/>
    <property type="project" value="UniProtKB"/>
</dbReference>
<dbReference type="CDD" id="cd10142">
    <property type="entry name" value="HD_SAS6_N"/>
    <property type="match status" value="1"/>
</dbReference>
<dbReference type="Gene3D" id="6.10.140.2140">
    <property type="match status" value="1"/>
</dbReference>
<dbReference type="Gene3D" id="2.170.210.20">
    <property type="entry name" value="Spindle assembly abnormal protein 6, N-terminal domain"/>
    <property type="match status" value="1"/>
</dbReference>
<dbReference type="InterPro" id="IPR048600">
    <property type="entry name" value="Sas-6_helical"/>
</dbReference>
<dbReference type="InterPro" id="IPR032396">
    <property type="entry name" value="SAS-6_N"/>
</dbReference>
<dbReference type="InterPro" id="IPR038558">
    <property type="entry name" value="SAS-6_N_sf"/>
</dbReference>
<dbReference type="PANTHER" id="PTHR44281">
    <property type="entry name" value="SPINDLE ASSEMBLY ABNORMAL PROTEIN 6 HOMOLOG"/>
    <property type="match status" value="1"/>
</dbReference>
<dbReference type="PANTHER" id="PTHR44281:SF2">
    <property type="entry name" value="SPINDLE ASSEMBLY ABNORMAL PROTEIN 6 HOMOLOG"/>
    <property type="match status" value="1"/>
</dbReference>
<dbReference type="Pfam" id="PF21503">
    <property type="entry name" value="Sas-6_helical"/>
    <property type="match status" value="1"/>
</dbReference>
<dbReference type="Pfam" id="PF16531">
    <property type="entry name" value="SAS-6_N"/>
    <property type="match status" value="1"/>
</dbReference>
<dbReference type="SUPFAM" id="SSF57997">
    <property type="entry name" value="Tropomyosin"/>
    <property type="match status" value="1"/>
</dbReference>
<gene>
    <name evidence="6" type="primary">sas-6</name>
    <name evidence="6" type="ORF">Y45F10D.9</name>
</gene>
<feature type="chain" id="PRO_0000189978" description="Spindle assembly abnormal protein 6">
    <location>
        <begin position="1"/>
        <end position="492"/>
    </location>
</feature>
<feature type="domain" description="PISA">
    <location>
        <begin position="46"/>
        <end position="98"/>
    </location>
</feature>
<feature type="coiled-coil region" evidence="1">
    <location>
        <begin position="192"/>
        <end position="407"/>
    </location>
</feature>
<feature type="mutagenesis site" description="Homodimerizes but do not form higher ordre structures." evidence="5">
    <original>I</original>
    <variation>D</variation>
    <location>
        <position position="154"/>
    </location>
</feature>
<feature type="strand" evidence="7">
    <location>
        <begin position="5"/>
        <end position="19"/>
    </location>
</feature>
<feature type="strand" evidence="7">
    <location>
        <begin position="27"/>
        <end position="42"/>
    </location>
</feature>
<feature type="turn" evidence="7">
    <location>
        <begin position="44"/>
        <end position="46"/>
    </location>
</feature>
<feature type="strand" evidence="7">
    <location>
        <begin position="49"/>
        <end position="56"/>
    </location>
</feature>
<feature type="strand" evidence="7">
    <location>
        <begin position="64"/>
        <end position="69"/>
    </location>
</feature>
<feature type="helix" evidence="7">
    <location>
        <begin position="71"/>
        <end position="81"/>
    </location>
</feature>
<feature type="turn" evidence="7">
    <location>
        <begin position="87"/>
        <end position="89"/>
    </location>
</feature>
<feature type="helix" evidence="7">
    <location>
        <begin position="90"/>
        <end position="100"/>
    </location>
</feature>
<feature type="strand" evidence="7">
    <location>
        <begin position="132"/>
        <end position="137"/>
    </location>
</feature>
<feature type="strand" evidence="7">
    <location>
        <begin position="141"/>
        <end position="149"/>
    </location>
</feature>
<feature type="strand" evidence="7">
    <location>
        <begin position="153"/>
        <end position="155"/>
    </location>
</feature>
<feature type="strand" evidence="7">
    <location>
        <begin position="158"/>
        <end position="166"/>
    </location>
</feature>
<feature type="helix" evidence="8">
    <location>
        <begin position="169"/>
        <end position="189"/>
    </location>
</feature>
<feature type="helix" evidence="8">
    <location>
        <begin position="193"/>
        <end position="196"/>
    </location>
</feature>
<feature type="helix" evidence="8">
    <location>
        <begin position="199"/>
        <end position="207"/>
    </location>
</feature>
<feature type="strand" evidence="9">
    <location>
        <begin position="252"/>
        <end position="255"/>
    </location>
</feature>
<feature type="helix" evidence="9">
    <location>
        <begin position="256"/>
        <end position="342"/>
    </location>
</feature>
<feature type="helix" evidence="9">
    <location>
        <begin position="344"/>
        <end position="348"/>
    </location>
</feature>
<feature type="helix" evidence="9">
    <location>
        <begin position="350"/>
        <end position="402"/>
    </location>
</feature>
<feature type="turn" evidence="9">
    <location>
        <begin position="403"/>
        <end position="406"/>
    </location>
</feature>
<evidence type="ECO:0000255" key="1"/>
<evidence type="ECO:0000269" key="2">
    <source>
    </source>
</evidence>
<evidence type="ECO:0000269" key="3">
    <source>
    </source>
</evidence>
<evidence type="ECO:0000269" key="4">
    <source>
    </source>
</evidence>
<evidence type="ECO:0000269" key="5">
    <source>
    </source>
</evidence>
<evidence type="ECO:0000312" key="6">
    <source>
        <dbReference type="WormBase" id="Y45F10D.9"/>
    </source>
</evidence>
<evidence type="ECO:0007829" key="7">
    <source>
        <dbReference type="PDB" id="4G79"/>
    </source>
</evidence>
<evidence type="ECO:0007829" key="8">
    <source>
        <dbReference type="PDB" id="4GFC"/>
    </source>
</evidence>
<evidence type="ECO:0007829" key="9">
    <source>
        <dbReference type="PDB" id="4GKW"/>
    </source>
</evidence>
<organism>
    <name type="scientific">Caenorhabditis elegans</name>
    <dbReference type="NCBI Taxonomy" id="6239"/>
    <lineage>
        <taxon>Eukaryota</taxon>
        <taxon>Metazoa</taxon>
        <taxon>Ecdysozoa</taxon>
        <taxon>Nematoda</taxon>
        <taxon>Chromadorea</taxon>
        <taxon>Rhabditida</taxon>
        <taxon>Rhabditina</taxon>
        <taxon>Rhabditomorpha</taxon>
        <taxon>Rhabditoidea</taxon>
        <taxon>Rhabditidae</taxon>
        <taxon>Peloderinae</taxon>
        <taxon>Caenorhabditis</taxon>
    </lineage>
</organism>
<sequence length="492" mass="56038">MTSKIALFDQTLIASLLQPLSLNQPDFKAYKTKVKLKISEQRNETSGEKELKFEISRSDDFEFLFSETLNNEKYQILARDHDLTVDFDAFPKVIIQHLLCKNIVKNLEEDGEVDARKKAGYHSIADPGKPTEINIILDAEKNFCSFELFSKTPISKGKIFSIKLHAVRGDHLISHLLKICSSQAVKLSTFYKSADELASLRQKCGDLEKQVEKLSGVKEEFEEMSEKFKELEDEVELVKEERENIRLLVEDKEDEVADLKQDTESLQKQLEENQEELEIVGNMLREEQGKVDQLQKRNVAHQKEIGKLRAELGTAQRNLEKADQLLKRNSQQQNQQSLDMRKLGELEADLKEKDSMVESLTETIGILRKELENEKLKAAENMDSFEKLSMENENLKEKIAHYRAQRFSPAPSGLPGLQTGLTNRLTPSFKPVLGPHTPYGANLNSRTPFRDNTTLNFQNSTIATPHAFRFNSQLIADETTGSSVTNTPPAQR</sequence>
<proteinExistence type="evidence at protein level"/>
<comment type="function">
    <text evidence="2 3 4">Central scaffolding component of the centrioles ensuring their 9-fold symmetry (PubMed:15572125). Required for centrosome biogenesis and duplication (PubMed:15665853, PubMed:19081077).</text>
</comment>
<comment type="subunit">
    <text evidence="3">Nine homodimers form a cartwheel structure with an internal diameter of 23 nM and radial spokes connecting to the microtubule triplets. Interacts with sas-5.</text>
</comment>
<comment type="interaction">
    <interactant intactId="EBI-327247">
        <id>O62479</id>
    </interactant>
    <interactant intactId="EBI-327608">
        <id>Q20010</id>
        <label>sas-5</label>
    </interactant>
    <organismsDiffer>false</organismsDiffer>
    <experiments>25</experiments>
</comment>
<comment type="interaction">
    <interactant intactId="EBI-327247">
        <id>O62479</id>
    </interactant>
    <interactant intactId="EBI-327247">
        <id>O62479</id>
        <label>sas-6</label>
    </interactant>
    <organismsDiffer>false</organismsDiffer>
    <experiments>9</experiments>
</comment>
<comment type="subcellular location">
    <subcellularLocation>
        <location>Cytoplasm</location>
    </subcellularLocation>
    <subcellularLocation>
        <location>Cytoplasm</location>
        <location>Cytoskeleton</location>
        <location>Microtubule organizing center</location>
        <location>Centrosome</location>
        <location>Centriole</location>
    </subcellularLocation>
    <text>Localizes to centrioles, zyg-1 and sas-5 are required for centriole localization.</text>
</comment>
<comment type="developmental stage">
    <text evidence="2 3">Recruited to centrioles at the onset of the centrosome duplication cycle, then associates with the emerging daughter centriole.</text>
</comment>
<comment type="domain">
    <text evidence="3">The coiled coil domain is necessary and sufficient for interaction with sas-5.</text>
</comment>
<comment type="domain">
    <text evidence="3">The 35 nM long coiled-coil domain mediates homodimerization while the globular N-terminus links the dimers at an angle of 40 degrees to form the inner ring.</text>
</comment>
<comment type="disruption phenotype">
    <text evidence="4">RNAi-mediated knockdown results in failed centrosome duplication in embryos.</text>
</comment>